<feature type="chain" id="PRO_0000412995" description="Tissue- and phase-specific nuclear protein">
    <location>
        <begin position="1"/>
        <end position="81"/>
    </location>
</feature>
<organism>
    <name type="scientific">Podarcis siculus</name>
    <name type="common">Italian wall lizard</name>
    <dbReference type="NCBI Taxonomy" id="65484"/>
    <lineage>
        <taxon>Eukaryota</taxon>
        <taxon>Metazoa</taxon>
        <taxon>Chordata</taxon>
        <taxon>Craniata</taxon>
        <taxon>Vertebrata</taxon>
        <taxon>Euteleostomi</taxon>
        <taxon>Lepidosauria</taxon>
        <taxon>Squamata</taxon>
        <taxon>Bifurcata</taxon>
        <taxon>Unidentata</taxon>
        <taxon>Episquamata</taxon>
        <taxon>Laterata</taxon>
        <taxon>Lacertibaenia</taxon>
        <taxon>Lacertidae</taxon>
        <taxon>Podarcis</taxon>
    </lineage>
</organism>
<protein>
    <recommendedName>
        <fullName evidence="3">Tissue- and phase-specific nuclear protein</fullName>
    </recommendedName>
    <alternativeName>
        <fullName evidence="4">Specific nuclear protein</fullName>
        <shortName evidence="3 4">SNP</shortName>
    </alternativeName>
</protein>
<name>SNP_PODSI</name>
<keyword id="KW-0903">Direct protein sequencing</keyword>
<keyword id="KW-0539">Nucleus</keyword>
<reference evidence="5" key="1">
    <citation type="journal article" date="2000" name="Biol. Chem.">
        <title>Characterization of SNP, a novel tissue- and phase-specific nuclear protein expressed during the proliferative phase in the oviduct of the lizard Podarcis sicula Raf.</title>
        <authorList>
            <person name="Quesada P."/>
            <person name="Atorino L."/>
            <person name="Parente A."/>
            <person name="Del Vecchio Blanco F."/>
            <person name="Di Maro A."/>
            <person name="Ciarcia G."/>
            <person name="Farina B."/>
        </authorList>
    </citation>
    <scope>PROTEIN SEQUENCE</scope>
    <scope>SUBCELLULAR LOCATION</scope>
    <scope>TISSUE SPECIFICITY</scope>
    <scope>MASS SPECTROMETRY</scope>
    <source>
        <tissue evidence="1">Oviduct</tissue>
    </source>
</reference>
<reference evidence="5" key="2">
    <citation type="journal article" date="1986" name="Mol. Cell. Endocrinol.">
        <title>A specific nuclear protein and poly(ADPribose)transferase activity in lizard oviduct during the reproductive cycle.</title>
        <authorList>
            <person name="Ciarcia G."/>
            <person name="Lancieri M."/>
            <person name="Suzuki H."/>
            <person name="Manzo C."/>
            <person name="Vitale L."/>
            <person name="Tornese Buonamassa D."/>
            <person name="Botte V."/>
        </authorList>
    </citation>
    <scope>SUBCELLULAR LOCATION</scope>
    <scope>TISSUE SPECIFICITY</scope>
    <scope>DEVELOPMENTAL STAGE</scope>
    <scope>INDUCTION</scope>
</reference>
<dbReference type="GO" id="GO:0005634">
    <property type="term" value="C:nucleus"/>
    <property type="evidence" value="ECO:0007669"/>
    <property type="project" value="UniProtKB-SubCell"/>
</dbReference>
<comment type="subcellular location">
    <subcellularLocation>
        <location evidence="1 2">Nucleus</location>
    </subcellularLocation>
</comment>
<comment type="tissue specificity">
    <text evidence="1 2">Expressed in oviduct, where expression levels are higher in uterine sections than in tuba sections. No expression detected in small intestine and liver (at protein level).</text>
</comment>
<comment type="developmental stage">
    <text evidence="2">Expressed during the recovery phase of the reproductive cycle. Not expressed in any other phase of the annual cycle (at protein level).</text>
</comment>
<comment type="induction">
    <text evidence="2">By estradiol injection in ovariectomized females.</text>
</comment>
<comment type="mass spectrometry"/>
<sequence>GYKHQCRDRCYGTCGTSCKYGASRPSCACALHGGYCCVARPYHYPYPHPRPVPLPAPAPRPAPHYPVHHPKWPHWRPHYKA</sequence>
<proteinExistence type="evidence at protein level"/>
<accession>P86981</accession>
<evidence type="ECO:0000269" key="1">
    <source>
    </source>
</evidence>
<evidence type="ECO:0000269" key="2">
    <source>
    </source>
</evidence>
<evidence type="ECO:0000303" key="3">
    <source>
    </source>
</evidence>
<evidence type="ECO:0000303" key="4">
    <source>
    </source>
</evidence>
<evidence type="ECO:0000305" key="5"/>